<organism>
    <name type="scientific">Salmonella phage P22</name>
    <name type="common">Bacteriophage P22</name>
    <dbReference type="NCBI Taxonomy" id="10754"/>
    <lineage>
        <taxon>Viruses</taxon>
        <taxon>Duplodnaviria</taxon>
        <taxon>Heunggongvirae</taxon>
        <taxon>Uroviricota</taxon>
        <taxon>Caudoviricetes</taxon>
        <taxon>Lederbergvirus</taxon>
    </lineage>
</organism>
<gene>
    <name type="primary">23</name>
</gene>
<sequence length="207" mass="22353">MRLESVAKFHSPKSPMMSDSPRATASDSLSGTDVMAAMGMAQSQAGFGMAAFCGKHELSQNDKQKAINYLMQFAHKVSGKYPGVAKLEGNTKAKVLQVLATFAYADYCRSAATPGARCRDCHGTGRAVDIAKTEQWGRVVEKVCGRCKGVGYSKVPASAAYRAITMLIPNLTQPTWSRTVKPLYDALVVQCHKEESIADNILNAVTR</sequence>
<accession>P57020</accession>
<accession>A0A2H4A365</accession>
<accession>A8CGF2</accession>
<accession>Q8LTF1</accession>
<protein>
    <recommendedName>
        <fullName evidence="1">Antitermination protein Q</fullName>
    </recommendedName>
</protein>
<name>REGQ_BPP22</name>
<dbReference type="EMBL" id="AF217253">
    <property type="protein sequence ID" value="AAF75038.1"/>
    <property type="molecule type" value="Genomic_DNA"/>
</dbReference>
<dbReference type="EMBL" id="AB362338">
    <property type="protein sequence ID" value="BAF80778.1"/>
    <property type="molecule type" value="Genomic_DNA"/>
</dbReference>
<dbReference type="EMBL" id="AB426868">
    <property type="protein sequence ID" value="BAG12661.1"/>
    <property type="molecule type" value="Genomic_DNA"/>
</dbReference>
<dbReference type="EMBL" id="AF527608">
    <property type="protein sequence ID" value="AAM81439.1"/>
    <property type="molecule type" value="Genomic_DNA"/>
</dbReference>
<dbReference type="EMBL" id="BK000583">
    <property type="protein sequence ID" value="DAA01037.1"/>
    <property type="molecule type" value="Genomic_DNA"/>
</dbReference>
<dbReference type="RefSeq" id="YP_063730.1">
    <property type="nucleotide sequence ID" value="NC_002371.2"/>
</dbReference>
<dbReference type="SMR" id="P57020"/>
<dbReference type="GeneID" id="2944235"/>
<dbReference type="KEGG" id="vg:2944235"/>
<dbReference type="OrthoDB" id="8841at10239"/>
<dbReference type="Proteomes" id="UP000001315">
    <property type="component" value="Segment"/>
</dbReference>
<dbReference type="Proteomes" id="UP000001795">
    <property type="component" value="Segment"/>
</dbReference>
<dbReference type="Proteomes" id="UP000001796">
    <property type="component" value="Segment"/>
</dbReference>
<dbReference type="Proteomes" id="UP000002165">
    <property type="component" value="Segment"/>
</dbReference>
<dbReference type="Proteomes" id="UP000007960">
    <property type="component" value="Segment"/>
</dbReference>
<dbReference type="GO" id="GO:0003677">
    <property type="term" value="F:DNA binding"/>
    <property type="evidence" value="ECO:0007669"/>
    <property type="project" value="UniProtKB-UniRule"/>
</dbReference>
<dbReference type="GO" id="GO:0008270">
    <property type="term" value="F:zinc ion binding"/>
    <property type="evidence" value="ECO:0007669"/>
    <property type="project" value="UniProtKB-UniRule"/>
</dbReference>
<dbReference type="GO" id="GO:0006353">
    <property type="term" value="P:DNA-templated transcription termination"/>
    <property type="evidence" value="ECO:0007669"/>
    <property type="project" value="UniProtKB-UniRule"/>
</dbReference>
<dbReference type="GO" id="GO:0031564">
    <property type="term" value="P:transcription antitermination"/>
    <property type="evidence" value="ECO:0007669"/>
    <property type="project" value="UniProtKB-UniRule"/>
</dbReference>
<dbReference type="Gene3D" id="1.10.274.110">
    <property type="match status" value="1"/>
</dbReference>
<dbReference type="HAMAP" id="MF_04158">
    <property type="entry name" value="Antitermination_lambda"/>
    <property type="match status" value="1"/>
</dbReference>
<dbReference type="InterPro" id="IPR038500">
    <property type="entry name" value="Antitermination_sf"/>
</dbReference>
<dbReference type="InterPro" id="IPR003222">
    <property type="entry name" value="Antitermntn"/>
</dbReference>
<dbReference type="InterPro" id="IPR036410">
    <property type="entry name" value="HSP_DnaJ_Cys-rich_dom_sf"/>
</dbReference>
<dbReference type="Pfam" id="PF03589">
    <property type="entry name" value="Antiterm"/>
    <property type="match status" value="2"/>
</dbReference>
<dbReference type="SUPFAM" id="SSF57938">
    <property type="entry name" value="DnaJ/Hsp40 cysteine-rich domain"/>
    <property type="match status" value="1"/>
</dbReference>
<feature type="chain" id="PRO_0000073893" description="Antitermination protein Q">
    <location>
        <begin position="1"/>
        <end position="207"/>
    </location>
</feature>
<feature type="zinc finger region" evidence="1">
    <location>
        <begin position="118"/>
        <end position="147"/>
    </location>
</feature>
<feature type="DNA-binding region" evidence="1">
    <location>
        <begin position="171"/>
        <end position="192"/>
    </location>
</feature>
<feature type="region of interest" description="Disordered" evidence="2">
    <location>
        <begin position="1"/>
        <end position="28"/>
    </location>
</feature>
<feature type="binding site" evidence="1">
    <location>
        <position position="118"/>
    </location>
    <ligand>
        <name>Zn(2+)</name>
        <dbReference type="ChEBI" id="CHEBI:29105"/>
    </ligand>
</feature>
<feature type="binding site" evidence="1">
    <location>
        <position position="121"/>
    </location>
    <ligand>
        <name>Zn(2+)</name>
        <dbReference type="ChEBI" id="CHEBI:29105"/>
    </ligand>
</feature>
<feature type="binding site" evidence="1">
    <location>
        <position position="144"/>
    </location>
    <ligand>
        <name>Zn(2+)</name>
        <dbReference type="ChEBI" id="CHEBI:29105"/>
    </ligand>
</feature>
<feature type="binding site" evidence="1">
    <location>
        <position position="147"/>
    </location>
    <ligand>
        <name>Zn(2+)</name>
        <dbReference type="ChEBI" id="CHEBI:29105"/>
    </ligand>
</feature>
<feature type="site" description="Interaction with host rpoB" evidence="1">
    <location>
        <position position="101"/>
    </location>
</feature>
<feature type="site" description="Interaction with host RNA polymerase sigma factor RPOD" evidence="1">
    <location>
        <position position="134"/>
    </location>
</feature>
<feature type="site" description="Interaction with host rpoB" evidence="1">
    <location>
        <position position="160"/>
    </location>
</feature>
<feature type="site" description="Interaction with host rpoB" evidence="1">
    <location>
        <position position="165"/>
    </location>
</feature>
<feature type="sequence conflict" description="In Ref. 1; AAF75038." evidence="3" ref="1">
    <original>VGYSKV</original>
    <variation>FGCSKA</variation>
    <location>
        <begin position="150"/>
        <end position="155"/>
    </location>
</feature>
<feature type="sequence conflict" description="In Ref. 1; AAF75038." evidence="3" ref="1">
    <original>RAI</original>
    <variation>LSV</variation>
    <location>
        <begin position="162"/>
        <end position="164"/>
    </location>
</feature>
<organismHost>
    <name type="scientific">Salmonella typhimurium</name>
    <dbReference type="NCBI Taxonomy" id="90371"/>
</organismHost>
<keyword id="KW-0238">DNA-binding</keyword>
<keyword id="KW-0945">Host-virus interaction</keyword>
<keyword id="KW-0479">Metal-binding</keyword>
<keyword id="KW-1185">Reference proteome</keyword>
<keyword id="KW-0804">Transcription</keyword>
<keyword id="KW-0805">Transcription regulation</keyword>
<keyword id="KW-0806">Transcription termination</keyword>
<keyword id="KW-0862">Zinc</keyword>
<keyword id="KW-0863">Zinc-finger</keyword>
<proteinExistence type="inferred from homology"/>
<reference key="1">
    <citation type="journal article" date="2000" name="J. Bacteriol.">
        <title>Sequence of the genome of Salmonella bacteriophage P22.</title>
        <authorList>
            <person name="Vander Byl C.S."/>
            <person name="Kropinski A.M.B."/>
        </authorList>
    </citation>
    <scope>NUCLEOTIDE SEQUENCE [LARGE SCALE GENOMIC DNA]</scope>
</reference>
<reference key="2">
    <citation type="journal article" date="2003" name="J. Bacteriol.">
        <title>Corrected sequence of the bacteriophage P22 genome.</title>
        <authorList>
            <person name="Pedulla M.L."/>
            <person name="Ford M.E."/>
            <person name="Karthikeyan T."/>
            <person name="Houtz J.M."/>
            <person name="Hendrix R.W."/>
            <person name="Hatfull G.F."/>
            <person name="Poteete A.R."/>
            <person name="Gilcrease E.B."/>
            <person name="Winn-Stapley D.A."/>
            <person name="Casjens S.R."/>
        </authorList>
    </citation>
    <scope>NUCLEOTIDE SEQUENCE [LARGE SCALE GENOMIC DNA]</scope>
</reference>
<reference key="3">
    <citation type="journal article" date="2008" name="Appl. Environ. Microbiol.">
        <title>Bacteriophage P22 and Staphylococcus aureus attenuation on nonporous fomites as determined by plate assay and quantitative PCR.</title>
        <authorList>
            <person name="Masago Y."/>
            <person name="Shibata T."/>
            <person name="Rose J.B."/>
        </authorList>
    </citation>
    <scope>NUCLEOTIDE SEQUENCE [LARGE SCALE GENOMIC DNA]</scope>
    <source>
        <strain>MSU</strain>
    </source>
</reference>
<reference key="4">
    <citation type="submission" date="2008-03" db="EMBL/GenBank/DDBJ databases">
        <title>The Molecular Identity of Contaminant Hydrology (20 years later).</title>
        <authorList>
            <person name="Masago Y."/>
            <person name="Fong T.T."/>
            <person name="Rose J.B."/>
        </authorList>
    </citation>
    <scope>NUCLEOTIDE SEQUENCE [LARGE SCALE GENOMIC DNA]</scope>
    <source>
        <strain>ATCC 19585-B1</strain>
    </source>
</reference>
<comment type="function">
    <text evidence="1">Mediates the switch from middle to viral late gene expression by associating with host RNA polymerase (RNAP) so that the latter can read without pausing and through transcription terminators preceding late genes. Competes with host factor sigma 70 for binding to RPOB, the beta-subunit of host RNAP. To join the elongation complex, binds a specific DNA Q-binding element (QBE) and interacts with RNAP that is paused during early elongation. Participates in the lysis-lysogeny decision by activating the expression of the late lytic genes.</text>
</comment>
<comment type="subunit">
    <text evidence="1">Interacts with host RPOB (via flap domain); this interaction renders host RNAP resistant to transcription pausing and allows it to read through termination signals. Interacts with host RNA polymerase sigma factor RPOD (via domain-4). Interacts with host NUSA (via N-terminus and AR2 domain); this interaction releases the autoinhibition of NUSA.</text>
</comment>
<comment type="similarity">
    <text evidence="1">Belongs to the phage antitermination Q type 2 family.</text>
</comment>
<evidence type="ECO:0000255" key="1">
    <source>
        <dbReference type="HAMAP-Rule" id="MF_04158"/>
    </source>
</evidence>
<evidence type="ECO:0000256" key="2">
    <source>
        <dbReference type="SAM" id="MobiDB-lite"/>
    </source>
</evidence>
<evidence type="ECO:0000305" key="3"/>